<dbReference type="EMBL" id="CP000789">
    <property type="protein sequence ID" value="ABU72328.1"/>
    <property type="molecule type" value="Genomic_DNA"/>
</dbReference>
<dbReference type="RefSeq" id="WP_005530307.1">
    <property type="nucleotide sequence ID" value="NC_022269.1"/>
</dbReference>
<dbReference type="SMR" id="A7MUW8"/>
<dbReference type="KEGG" id="vha:VIBHAR_03381"/>
<dbReference type="PATRIC" id="fig|338187.25.peg.2816"/>
<dbReference type="Proteomes" id="UP000008152">
    <property type="component" value="Chromosome I"/>
</dbReference>
<dbReference type="GO" id="GO:0005829">
    <property type="term" value="C:cytosol"/>
    <property type="evidence" value="ECO:0007669"/>
    <property type="project" value="TreeGrafter"/>
</dbReference>
<dbReference type="GO" id="GO:0005525">
    <property type="term" value="F:GTP binding"/>
    <property type="evidence" value="ECO:0007669"/>
    <property type="project" value="UniProtKB-UniRule"/>
</dbReference>
<dbReference type="GO" id="GO:0003924">
    <property type="term" value="F:GTPase activity"/>
    <property type="evidence" value="ECO:0007669"/>
    <property type="project" value="InterPro"/>
</dbReference>
<dbReference type="GO" id="GO:0097216">
    <property type="term" value="F:guanosine tetraphosphate binding"/>
    <property type="evidence" value="ECO:0007669"/>
    <property type="project" value="UniProtKB-ARBA"/>
</dbReference>
<dbReference type="GO" id="GO:0016150">
    <property type="term" value="F:translation release factor activity, codon nonspecific"/>
    <property type="evidence" value="ECO:0007669"/>
    <property type="project" value="TreeGrafter"/>
</dbReference>
<dbReference type="GO" id="GO:0016149">
    <property type="term" value="F:translation release factor activity, codon specific"/>
    <property type="evidence" value="ECO:0007669"/>
    <property type="project" value="UniProtKB-UniRule"/>
</dbReference>
<dbReference type="GO" id="GO:0006449">
    <property type="term" value="P:regulation of translational termination"/>
    <property type="evidence" value="ECO:0007669"/>
    <property type="project" value="UniProtKB-UniRule"/>
</dbReference>
<dbReference type="CDD" id="cd04169">
    <property type="entry name" value="RF3"/>
    <property type="match status" value="1"/>
</dbReference>
<dbReference type="CDD" id="cd03689">
    <property type="entry name" value="RF3_II"/>
    <property type="match status" value="1"/>
</dbReference>
<dbReference type="CDD" id="cd16259">
    <property type="entry name" value="RF3_III"/>
    <property type="match status" value="1"/>
</dbReference>
<dbReference type="FunFam" id="2.40.30.10:FF:000040">
    <property type="entry name" value="Peptide chain release factor 3"/>
    <property type="match status" value="1"/>
</dbReference>
<dbReference type="FunFam" id="3.30.70.3280:FF:000001">
    <property type="entry name" value="Peptide chain release factor 3"/>
    <property type="match status" value="1"/>
</dbReference>
<dbReference type="FunFam" id="3.40.50.300:FF:000542">
    <property type="entry name" value="Peptide chain release factor 3"/>
    <property type="match status" value="1"/>
</dbReference>
<dbReference type="Gene3D" id="3.40.50.300">
    <property type="entry name" value="P-loop containing nucleotide triphosphate hydrolases"/>
    <property type="match status" value="2"/>
</dbReference>
<dbReference type="Gene3D" id="3.30.70.3280">
    <property type="entry name" value="Peptide chain release factor 3, domain III"/>
    <property type="match status" value="1"/>
</dbReference>
<dbReference type="HAMAP" id="MF_00072">
    <property type="entry name" value="Rel_fac_3"/>
    <property type="match status" value="1"/>
</dbReference>
<dbReference type="InterPro" id="IPR053905">
    <property type="entry name" value="EF-G-like_DII"/>
</dbReference>
<dbReference type="InterPro" id="IPR035647">
    <property type="entry name" value="EFG_III/V"/>
</dbReference>
<dbReference type="InterPro" id="IPR031157">
    <property type="entry name" value="G_TR_CS"/>
</dbReference>
<dbReference type="InterPro" id="IPR027417">
    <property type="entry name" value="P-loop_NTPase"/>
</dbReference>
<dbReference type="InterPro" id="IPR004548">
    <property type="entry name" value="PrfC"/>
</dbReference>
<dbReference type="InterPro" id="IPR032090">
    <property type="entry name" value="RF3_C"/>
</dbReference>
<dbReference type="InterPro" id="IPR038467">
    <property type="entry name" value="RF3_dom_3_sf"/>
</dbReference>
<dbReference type="InterPro" id="IPR041732">
    <property type="entry name" value="RF3_GTP-bd"/>
</dbReference>
<dbReference type="InterPro" id="IPR005225">
    <property type="entry name" value="Small_GTP-bd"/>
</dbReference>
<dbReference type="InterPro" id="IPR000795">
    <property type="entry name" value="T_Tr_GTP-bd_dom"/>
</dbReference>
<dbReference type="InterPro" id="IPR009000">
    <property type="entry name" value="Transl_B-barrel_sf"/>
</dbReference>
<dbReference type="NCBIfam" id="TIGR00503">
    <property type="entry name" value="prfC"/>
    <property type="match status" value="1"/>
</dbReference>
<dbReference type="NCBIfam" id="NF001964">
    <property type="entry name" value="PRK00741.1"/>
    <property type="match status" value="1"/>
</dbReference>
<dbReference type="NCBIfam" id="TIGR00231">
    <property type="entry name" value="small_GTP"/>
    <property type="match status" value="1"/>
</dbReference>
<dbReference type="PANTHER" id="PTHR43556">
    <property type="entry name" value="PEPTIDE CHAIN RELEASE FACTOR RF3"/>
    <property type="match status" value="1"/>
</dbReference>
<dbReference type="PANTHER" id="PTHR43556:SF2">
    <property type="entry name" value="PEPTIDE CHAIN RELEASE FACTOR RF3"/>
    <property type="match status" value="1"/>
</dbReference>
<dbReference type="Pfam" id="PF22042">
    <property type="entry name" value="EF-G_D2"/>
    <property type="match status" value="1"/>
</dbReference>
<dbReference type="Pfam" id="PF00009">
    <property type="entry name" value="GTP_EFTU"/>
    <property type="match status" value="1"/>
</dbReference>
<dbReference type="Pfam" id="PF16658">
    <property type="entry name" value="RF3_C"/>
    <property type="match status" value="1"/>
</dbReference>
<dbReference type="PRINTS" id="PR00315">
    <property type="entry name" value="ELONGATNFCT"/>
</dbReference>
<dbReference type="SUPFAM" id="SSF54980">
    <property type="entry name" value="EF-G C-terminal domain-like"/>
    <property type="match status" value="1"/>
</dbReference>
<dbReference type="SUPFAM" id="SSF52540">
    <property type="entry name" value="P-loop containing nucleoside triphosphate hydrolases"/>
    <property type="match status" value="1"/>
</dbReference>
<dbReference type="SUPFAM" id="SSF50447">
    <property type="entry name" value="Translation proteins"/>
    <property type="match status" value="1"/>
</dbReference>
<dbReference type="PROSITE" id="PS00301">
    <property type="entry name" value="G_TR_1"/>
    <property type="match status" value="1"/>
</dbReference>
<dbReference type="PROSITE" id="PS51722">
    <property type="entry name" value="G_TR_2"/>
    <property type="match status" value="1"/>
</dbReference>
<evidence type="ECO:0000255" key="1">
    <source>
        <dbReference type="HAMAP-Rule" id="MF_00072"/>
    </source>
</evidence>
<proteinExistence type="inferred from homology"/>
<keyword id="KW-0963">Cytoplasm</keyword>
<keyword id="KW-0342">GTP-binding</keyword>
<keyword id="KW-0547">Nucleotide-binding</keyword>
<keyword id="KW-0648">Protein biosynthesis</keyword>
<sequence length="529" mass="59206">MSNPLFLGEVSKRRTFAIISHPDAGKTTITEKVLLFGNAIQKAGTVKGRGNAQHAKSDWMEMEKERGISVTTSVMQFPYNDCLVNLLDTPGHEDFSEDTYRTLTAVDSCLMVIDAAKGVEDRTRKLMEVTRLRDTPIVTFMNKLDRDVRDPMEVLDEVENELGMMCAPITWPIGCGKEFKGVYHIHRDETILYESGHGHEIQEVRIIKGLDNPELDEKVGESLAASVREELELVMGACPEFDHEAFLVGELTPVYFGTALGNFGVDHMLDGLTEWAPAPKTRQAVERDVEATEDKFSGFVFKIQANMDPKHRDRIAFMRIVSGTYTQGMKMNHVRLGKQVSISDAVTFMAGDRSRAEHAYAGDIIGLHNHGTIQIGDTFTQGEALKFSGIPNFAPELFRRIRLKDPLKQKQLLKGLVQLSEEGAVQVFRPLQNNDLIVGAVGVLQFDVVVARLKSEYNVEAIYEGVNVATARWVECGDAKKLDEFQRKNQTNLALDGGDNLTYIAPTMVNLNLAQERFPDIDFRATREH</sequence>
<gene>
    <name evidence="1" type="primary">prfC</name>
    <name type="ordered locus">VIBHAR_03381</name>
</gene>
<protein>
    <recommendedName>
        <fullName evidence="1">Peptide chain release factor 3</fullName>
        <shortName evidence="1">RF-3</shortName>
    </recommendedName>
</protein>
<feature type="chain" id="PRO_1000023695" description="Peptide chain release factor 3">
    <location>
        <begin position="1"/>
        <end position="529"/>
    </location>
</feature>
<feature type="domain" description="tr-type G">
    <location>
        <begin position="11"/>
        <end position="280"/>
    </location>
</feature>
<feature type="binding site" evidence="1">
    <location>
        <begin position="20"/>
        <end position="27"/>
    </location>
    <ligand>
        <name>GTP</name>
        <dbReference type="ChEBI" id="CHEBI:37565"/>
    </ligand>
</feature>
<feature type="binding site" evidence="1">
    <location>
        <begin position="88"/>
        <end position="92"/>
    </location>
    <ligand>
        <name>GTP</name>
        <dbReference type="ChEBI" id="CHEBI:37565"/>
    </ligand>
</feature>
<feature type="binding site" evidence="1">
    <location>
        <begin position="142"/>
        <end position="145"/>
    </location>
    <ligand>
        <name>GTP</name>
        <dbReference type="ChEBI" id="CHEBI:37565"/>
    </ligand>
</feature>
<comment type="function">
    <text evidence="1">Increases the formation of ribosomal termination complexes and stimulates activities of RF-1 and RF-2. It binds guanine nucleotides and has strong preference for UGA stop codons. It may interact directly with the ribosome. The stimulation of RF-1 and RF-2 is significantly reduced by GTP and GDP, but not by GMP.</text>
</comment>
<comment type="subcellular location">
    <subcellularLocation>
        <location evidence="1">Cytoplasm</location>
    </subcellularLocation>
</comment>
<comment type="similarity">
    <text evidence="1">Belongs to the TRAFAC class translation factor GTPase superfamily. Classic translation factor GTPase family. PrfC subfamily.</text>
</comment>
<reference key="1">
    <citation type="submission" date="2007-08" db="EMBL/GenBank/DDBJ databases">
        <authorList>
            <consortium name="The Vibrio harveyi Genome Sequencing Project"/>
            <person name="Bassler B."/>
            <person name="Clifton S.W."/>
            <person name="Fulton L."/>
            <person name="Delehaunty K."/>
            <person name="Fronick C."/>
            <person name="Harrison M."/>
            <person name="Markivic C."/>
            <person name="Fulton R."/>
            <person name="Tin-Wollam A.-M."/>
            <person name="Shah N."/>
            <person name="Pepin K."/>
            <person name="Nash W."/>
            <person name="Thiruvilangam P."/>
            <person name="Bhonagiri V."/>
            <person name="Waters C."/>
            <person name="Tu K.C."/>
            <person name="Irgon J."/>
            <person name="Wilson R.K."/>
        </authorList>
    </citation>
    <scope>NUCLEOTIDE SEQUENCE [LARGE SCALE GENOMIC DNA]</scope>
    <source>
        <strain>ATCC BAA-1116 / BB120</strain>
    </source>
</reference>
<name>RF3_VIBC1</name>
<organism>
    <name type="scientific">Vibrio campbellii (strain ATCC BAA-1116)</name>
    <dbReference type="NCBI Taxonomy" id="2902295"/>
    <lineage>
        <taxon>Bacteria</taxon>
        <taxon>Pseudomonadati</taxon>
        <taxon>Pseudomonadota</taxon>
        <taxon>Gammaproteobacteria</taxon>
        <taxon>Vibrionales</taxon>
        <taxon>Vibrionaceae</taxon>
        <taxon>Vibrio</taxon>
    </lineage>
</organism>
<accession>A7MUW8</accession>